<gene>
    <name type="primary">Arl4c</name>
    <name type="synonym">Arl7</name>
</gene>
<name>ARL4C_MOUSE</name>
<protein>
    <recommendedName>
        <fullName>ADP-ribosylation factor-like protein 4C</fullName>
    </recommendedName>
    <alternativeName>
        <fullName>ADP-ribosylation factor-like 7</fullName>
    </alternativeName>
</protein>
<proteinExistence type="evidence at transcript level"/>
<organism>
    <name type="scientific">Mus musculus</name>
    <name type="common">Mouse</name>
    <dbReference type="NCBI Taxonomy" id="10090"/>
    <lineage>
        <taxon>Eukaryota</taxon>
        <taxon>Metazoa</taxon>
        <taxon>Chordata</taxon>
        <taxon>Craniata</taxon>
        <taxon>Vertebrata</taxon>
        <taxon>Euteleostomi</taxon>
        <taxon>Mammalia</taxon>
        <taxon>Eutheria</taxon>
        <taxon>Euarchontoglires</taxon>
        <taxon>Glires</taxon>
        <taxon>Rodentia</taxon>
        <taxon>Myomorpha</taxon>
        <taxon>Muroidea</taxon>
        <taxon>Muridae</taxon>
        <taxon>Murinae</taxon>
        <taxon>Mus</taxon>
        <taxon>Mus</taxon>
    </lineage>
</organism>
<reference key="1">
    <citation type="journal article" date="1999" name="FEBS Lett.">
        <title>ADP-ribosylation factor (ARF)-like 4, 6, and 7 represent a subgroup of the ARF family characterization by rapid nucleotide exchange and a nuclear localization signal.</title>
        <authorList>
            <person name="Jacobs S."/>
            <person name="Schilf C."/>
            <person name="Fliegert F."/>
            <person name="Koling S."/>
            <person name="Weber Y."/>
            <person name="Schurmann A."/>
            <person name="Joost H.-G."/>
        </authorList>
    </citation>
    <scope>NUCLEOTIDE SEQUENCE [GENOMIC DNA]</scope>
    <source>
        <strain>129/SvJ</strain>
    </source>
</reference>
<reference key="2">
    <citation type="journal article" date="2005" name="Science">
        <title>The transcriptional landscape of the mammalian genome.</title>
        <authorList>
            <person name="Carninci P."/>
            <person name="Kasukawa T."/>
            <person name="Katayama S."/>
            <person name="Gough J."/>
            <person name="Frith M.C."/>
            <person name="Maeda N."/>
            <person name="Oyama R."/>
            <person name="Ravasi T."/>
            <person name="Lenhard B."/>
            <person name="Wells C."/>
            <person name="Kodzius R."/>
            <person name="Shimokawa K."/>
            <person name="Bajic V.B."/>
            <person name="Brenner S.E."/>
            <person name="Batalov S."/>
            <person name="Forrest A.R."/>
            <person name="Zavolan M."/>
            <person name="Davis M.J."/>
            <person name="Wilming L.G."/>
            <person name="Aidinis V."/>
            <person name="Allen J.E."/>
            <person name="Ambesi-Impiombato A."/>
            <person name="Apweiler R."/>
            <person name="Aturaliya R.N."/>
            <person name="Bailey T.L."/>
            <person name="Bansal M."/>
            <person name="Baxter L."/>
            <person name="Beisel K.W."/>
            <person name="Bersano T."/>
            <person name="Bono H."/>
            <person name="Chalk A.M."/>
            <person name="Chiu K.P."/>
            <person name="Choudhary V."/>
            <person name="Christoffels A."/>
            <person name="Clutterbuck D.R."/>
            <person name="Crowe M.L."/>
            <person name="Dalla E."/>
            <person name="Dalrymple B.P."/>
            <person name="de Bono B."/>
            <person name="Della Gatta G."/>
            <person name="di Bernardo D."/>
            <person name="Down T."/>
            <person name="Engstrom P."/>
            <person name="Fagiolini M."/>
            <person name="Faulkner G."/>
            <person name="Fletcher C.F."/>
            <person name="Fukushima T."/>
            <person name="Furuno M."/>
            <person name="Futaki S."/>
            <person name="Gariboldi M."/>
            <person name="Georgii-Hemming P."/>
            <person name="Gingeras T.R."/>
            <person name="Gojobori T."/>
            <person name="Green R.E."/>
            <person name="Gustincich S."/>
            <person name="Harbers M."/>
            <person name="Hayashi Y."/>
            <person name="Hensch T.K."/>
            <person name="Hirokawa N."/>
            <person name="Hill D."/>
            <person name="Huminiecki L."/>
            <person name="Iacono M."/>
            <person name="Ikeo K."/>
            <person name="Iwama A."/>
            <person name="Ishikawa T."/>
            <person name="Jakt M."/>
            <person name="Kanapin A."/>
            <person name="Katoh M."/>
            <person name="Kawasawa Y."/>
            <person name="Kelso J."/>
            <person name="Kitamura H."/>
            <person name="Kitano H."/>
            <person name="Kollias G."/>
            <person name="Krishnan S.P."/>
            <person name="Kruger A."/>
            <person name="Kummerfeld S.K."/>
            <person name="Kurochkin I.V."/>
            <person name="Lareau L.F."/>
            <person name="Lazarevic D."/>
            <person name="Lipovich L."/>
            <person name="Liu J."/>
            <person name="Liuni S."/>
            <person name="McWilliam S."/>
            <person name="Madan Babu M."/>
            <person name="Madera M."/>
            <person name="Marchionni L."/>
            <person name="Matsuda H."/>
            <person name="Matsuzawa S."/>
            <person name="Miki H."/>
            <person name="Mignone F."/>
            <person name="Miyake S."/>
            <person name="Morris K."/>
            <person name="Mottagui-Tabar S."/>
            <person name="Mulder N."/>
            <person name="Nakano N."/>
            <person name="Nakauchi H."/>
            <person name="Ng P."/>
            <person name="Nilsson R."/>
            <person name="Nishiguchi S."/>
            <person name="Nishikawa S."/>
            <person name="Nori F."/>
            <person name="Ohara O."/>
            <person name="Okazaki Y."/>
            <person name="Orlando V."/>
            <person name="Pang K.C."/>
            <person name="Pavan W.J."/>
            <person name="Pavesi G."/>
            <person name="Pesole G."/>
            <person name="Petrovsky N."/>
            <person name="Piazza S."/>
            <person name="Reed J."/>
            <person name="Reid J.F."/>
            <person name="Ring B.Z."/>
            <person name="Ringwald M."/>
            <person name="Rost B."/>
            <person name="Ruan Y."/>
            <person name="Salzberg S.L."/>
            <person name="Sandelin A."/>
            <person name="Schneider C."/>
            <person name="Schoenbach C."/>
            <person name="Sekiguchi K."/>
            <person name="Semple C.A."/>
            <person name="Seno S."/>
            <person name="Sessa L."/>
            <person name="Sheng Y."/>
            <person name="Shibata Y."/>
            <person name="Shimada H."/>
            <person name="Shimada K."/>
            <person name="Silva D."/>
            <person name="Sinclair B."/>
            <person name="Sperling S."/>
            <person name="Stupka E."/>
            <person name="Sugiura K."/>
            <person name="Sultana R."/>
            <person name="Takenaka Y."/>
            <person name="Taki K."/>
            <person name="Tammoja K."/>
            <person name="Tan S.L."/>
            <person name="Tang S."/>
            <person name="Taylor M.S."/>
            <person name="Tegner J."/>
            <person name="Teichmann S.A."/>
            <person name="Ueda H.R."/>
            <person name="van Nimwegen E."/>
            <person name="Verardo R."/>
            <person name="Wei C.L."/>
            <person name="Yagi K."/>
            <person name="Yamanishi H."/>
            <person name="Zabarovsky E."/>
            <person name="Zhu S."/>
            <person name="Zimmer A."/>
            <person name="Hide W."/>
            <person name="Bult C."/>
            <person name="Grimmond S.M."/>
            <person name="Teasdale R.D."/>
            <person name="Liu E.T."/>
            <person name="Brusic V."/>
            <person name="Quackenbush J."/>
            <person name="Wahlestedt C."/>
            <person name="Mattick J.S."/>
            <person name="Hume D.A."/>
            <person name="Kai C."/>
            <person name="Sasaki D."/>
            <person name="Tomaru Y."/>
            <person name="Fukuda S."/>
            <person name="Kanamori-Katayama M."/>
            <person name="Suzuki M."/>
            <person name="Aoki J."/>
            <person name="Arakawa T."/>
            <person name="Iida J."/>
            <person name="Imamura K."/>
            <person name="Itoh M."/>
            <person name="Kato T."/>
            <person name="Kawaji H."/>
            <person name="Kawagashira N."/>
            <person name="Kawashima T."/>
            <person name="Kojima M."/>
            <person name="Kondo S."/>
            <person name="Konno H."/>
            <person name="Nakano K."/>
            <person name="Ninomiya N."/>
            <person name="Nishio T."/>
            <person name="Okada M."/>
            <person name="Plessy C."/>
            <person name="Shibata K."/>
            <person name="Shiraki T."/>
            <person name="Suzuki S."/>
            <person name="Tagami M."/>
            <person name="Waki K."/>
            <person name="Watahiki A."/>
            <person name="Okamura-Oho Y."/>
            <person name="Suzuki H."/>
            <person name="Kawai J."/>
            <person name="Hayashizaki Y."/>
        </authorList>
    </citation>
    <scope>NUCLEOTIDE SEQUENCE [LARGE SCALE MRNA]</scope>
    <source>
        <strain>C57BL/6J</strain>
        <tissue>Thymus</tissue>
    </source>
</reference>
<reference key="3">
    <citation type="journal article" date="2004" name="Genome Res.">
        <title>The status, quality, and expansion of the NIH full-length cDNA project: the Mammalian Gene Collection (MGC).</title>
        <authorList>
            <consortium name="The MGC Project Team"/>
        </authorList>
    </citation>
    <scope>NUCLEOTIDE SEQUENCE [LARGE SCALE MRNA]</scope>
    <source>
        <strain>C57BL/6J</strain>
        <tissue>Brain</tissue>
    </source>
</reference>
<sequence length="192" mass="21487">MGNISSNISAFQSLHIVMLGLDSAGKTTVLYRLKFNEFVNTVPTIGFNTEKIKLSNGTAKGISCHFWDVGGQEKLRPLWKSYSRCTDGIIYVVDSVDVDRLEEAKTELHKVTKFAENQGTPLLVIANKQDLPKSLPVAEIEKQLALHELIPATTYHVQPACAIIGEGLTEGMDKLYEMILKRRKSLKQKKKR</sequence>
<accession>P61208</accession>
<feature type="initiator methionine" description="Removed" evidence="2">
    <location>
        <position position="1"/>
    </location>
</feature>
<feature type="chain" id="PRO_0000207463" description="ADP-ribosylation factor-like protein 4C">
    <location>
        <begin position="2"/>
        <end position="192"/>
    </location>
</feature>
<feature type="binding site" evidence="1">
    <location>
        <begin position="20"/>
        <end position="27"/>
    </location>
    <ligand>
        <name>GTP</name>
        <dbReference type="ChEBI" id="CHEBI:37565"/>
    </ligand>
</feature>
<feature type="binding site" evidence="1">
    <location>
        <begin position="68"/>
        <end position="72"/>
    </location>
    <ligand>
        <name>GTP</name>
        <dbReference type="ChEBI" id="CHEBI:37565"/>
    </ligand>
</feature>
<feature type="binding site" evidence="1">
    <location>
        <begin position="127"/>
        <end position="130"/>
    </location>
    <ligand>
        <name>GTP</name>
        <dbReference type="ChEBI" id="CHEBI:37565"/>
    </ligand>
</feature>
<feature type="lipid moiety-binding region" description="N-myristoyl glycine" evidence="2">
    <location>
        <position position="2"/>
    </location>
</feature>
<keyword id="KW-1003">Cell membrane</keyword>
<keyword id="KW-0966">Cell projection</keyword>
<keyword id="KW-0963">Cytoplasm</keyword>
<keyword id="KW-0342">GTP-binding</keyword>
<keyword id="KW-0449">Lipoprotein</keyword>
<keyword id="KW-0472">Membrane</keyword>
<keyword id="KW-0519">Myristate</keyword>
<keyword id="KW-0547">Nucleotide-binding</keyword>
<keyword id="KW-1185">Reference proteome</keyword>
<keyword id="KW-0813">Transport</keyword>
<comment type="function">
    <text evidence="1">Small GTP-binding protein which cycles between an inactive GDP-bound and an active GTP-bound form, and the rate of cycling is regulated by guanine nucleotide exchange factors (GEF) and GTPase-activating proteins (GAP). GTP-binding protein that does not act as an allosteric activator of the cholera toxin catalytic subunit. May be involved in transport between a perinuclear compartment and the plasma membrane, apparently linked to the ABCA1-mediated cholesterol secretion pathway. Recruits CYTH1, CYTH2, CYTH3 and CYTH4 to the plasma membrane in the GDP-bound form. Regulates the microtubule-dependent intracellular vesicular transport from early endosome to recycling endosome process (By similarity).</text>
</comment>
<comment type="subunit">
    <text evidence="1">Interacts with CYTH2. Interacts with alpha tubulin; interaction is independent on the ARL4C GTP or GDP binding status (By similarity).</text>
</comment>
<comment type="subcellular location">
    <subcellularLocation>
        <location evidence="1">Cell projection</location>
        <location evidence="1">Filopodium</location>
    </subcellularLocation>
    <subcellularLocation>
        <location evidence="1">Cell membrane</location>
    </subcellularLocation>
    <subcellularLocation>
        <location evidence="1">Cytoplasm</location>
    </subcellularLocation>
</comment>
<comment type="similarity">
    <text evidence="3">Belongs to the small GTPase superfamily. Arf family.</text>
</comment>
<evidence type="ECO:0000250" key="1"/>
<evidence type="ECO:0000255" key="2"/>
<evidence type="ECO:0000305" key="3"/>
<dbReference type="EMBL" id="AJ623276">
    <property type="protein sequence ID" value="CAF22225.1"/>
    <property type="molecule type" value="Genomic_DNA"/>
</dbReference>
<dbReference type="EMBL" id="AK080335">
    <property type="protein sequence ID" value="BAC37882.1"/>
    <property type="molecule type" value="mRNA"/>
</dbReference>
<dbReference type="EMBL" id="AK080380">
    <property type="protein sequence ID" value="BAC37900.1"/>
    <property type="molecule type" value="mRNA"/>
</dbReference>
<dbReference type="EMBL" id="BC055769">
    <property type="protein sequence ID" value="AAH55769.1"/>
    <property type="molecule type" value="mRNA"/>
</dbReference>
<dbReference type="CCDS" id="CCDS15146.1"/>
<dbReference type="RefSeq" id="NP_796279.2">
    <property type="nucleotide sequence ID" value="NM_177305.4"/>
</dbReference>
<dbReference type="SMR" id="P61208"/>
<dbReference type="BioGRID" id="236437">
    <property type="interactions" value="1"/>
</dbReference>
<dbReference type="FunCoup" id="P61208">
    <property type="interactions" value="866"/>
</dbReference>
<dbReference type="STRING" id="10090.ENSMUSP00000124344"/>
<dbReference type="PhosphoSitePlus" id="P61208"/>
<dbReference type="PaxDb" id="10090-ENSMUSP00000124344"/>
<dbReference type="PeptideAtlas" id="P61208"/>
<dbReference type="ProteomicsDB" id="265103"/>
<dbReference type="Pumba" id="P61208"/>
<dbReference type="Antibodypedia" id="34460">
    <property type="antibodies" value="91 antibodies from 21 providers"/>
</dbReference>
<dbReference type="DNASU" id="320982"/>
<dbReference type="Ensembl" id="ENSMUST00000051236.11">
    <property type="protein sequence ID" value="ENSMUSP00000057085.5"/>
    <property type="gene ID" value="ENSMUSG00000049866.13"/>
</dbReference>
<dbReference type="Ensembl" id="ENSMUST00000159814.2">
    <property type="protein sequence ID" value="ENSMUSP00000124344.2"/>
    <property type="gene ID" value="ENSMUSG00000049866.13"/>
</dbReference>
<dbReference type="Ensembl" id="ENSMUST00000187810.2">
    <property type="protein sequence ID" value="ENSMUSP00000139499.2"/>
    <property type="gene ID" value="ENSMUSG00000049866.13"/>
</dbReference>
<dbReference type="GeneID" id="320982"/>
<dbReference type="KEGG" id="mmu:320982"/>
<dbReference type="UCSC" id="uc007byt.1">
    <property type="organism name" value="mouse"/>
</dbReference>
<dbReference type="AGR" id="MGI:2445172"/>
<dbReference type="CTD" id="10123"/>
<dbReference type="MGI" id="MGI:2445172">
    <property type="gene designation" value="Arl4c"/>
</dbReference>
<dbReference type="VEuPathDB" id="HostDB:ENSMUSG00000049866"/>
<dbReference type="eggNOG" id="KOG0070">
    <property type="taxonomic scope" value="Eukaryota"/>
</dbReference>
<dbReference type="GeneTree" id="ENSGT00940000160639"/>
<dbReference type="HOGENOM" id="CLU_040729_9_2_1"/>
<dbReference type="InParanoid" id="P61208"/>
<dbReference type="OMA" id="IRILWIN"/>
<dbReference type="OrthoDB" id="2011769at2759"/>
<dbReference type="PhylomeDB" id="P61208"/>
<dbReference type="TreeFam" id="TF105464"/>
<dbReference type="BioGRID-ORCS" id="320982">
    <property type="hits" value="2 hits in 77 CRISPR screens"/>
</dbReference>
<dbReference type="ChiTaRS" id="Arl4c">
    <property type="organism name" value="mouse"/>
</dbReference>
<dbReference type="PRO" id="PR:P61208"/>
<dbReference type="Proteomes" id="UP000000589">
    <property type="component" value="Chromosome 1"/>
</dbReference>
<dbReference type="RNAct" id="P61208">
    <property type="molecule type" value="protein"/>
</dbReference>
<dbReference type="Bgee" id="ENSMUSG00000049866">
    <property type="expression patterns" value="Expressed in vestibular membrane of cochlear duct and 231 other cell types or tissues"/>
</dbReference>
<dbReference type="GO" id="GO:0005737">
    <property type="term" value="C:cytoplasm"/>
    <property type="evidence" value="ECO:0000250"/>
    <property type="project" value="UniProtKB"/>
</dbReference>
<dbReference type="GO" id="GO:0005829">
    <property type="term" value="C:cytosol"/>
    <property type="evidence" value="ECO:0007669"/>
    <property type="project" value="Ensembl"/>
</dbReference>
<dbReference type="GO" id="GO:0030175">
    <property type="term" value="C:filopodium"/>
    <property type="evidence" value="ECO:0007669"/>
    <property type="project" value="UniProtKB-SubCell"/>
</dbReference>
<dbReference type="GO" id="GO:0005886">
    <property type="term" value="C:plasma membrane"/>
    <property type="evidence" value="ECO:0000250"/>
    <property type="project" value="UniProtKB"/>
</dbReference>
<dbReference type="GO" id="GO:0043014">
    <property type="term" value="F:alpha-tubulin binding"/>
    <property type="evidence" value="ECO:0000250"/>
    <property type="project" value="UniProtKB"/>
</dbReference>
<dbReference type="GO" id="GO:0005525">
    <property type="term" value="F:GTP binding"/>
    <property type="evidence" value="ECO:0007669"/>
    <property type="project" value="UniProtKB-KW"/>
</dbReference>
<dbReference type="GO" id="GO:0003924">
    <property type="term" value="F:GTPase activity"/>
    <property type="evidence" value="ECO:0007669"/>
    <property type="project" value="InterPro"/>
</dbReference>
<dbReference type="GO" id="GO:0032456">
    <property type="term" value="P:endocytic recycling"/>
    <property type="evidence" value="ECO:0000250"/>
    <property type="project" value="UniProtKB"/>
</dbReference>
<dbReference type="CDD" id="cd04152">
    <property type="entry name" value="Arl4_Arl7"/>
    <property type="match status" value="1"/>
</dbReference>
<dbReference type="FunFam" id="3.40.50.300:FF:000458">
    <property type="entry name" value="ADP-ribosylation factor-like protein 4C"/>
    <property type="match status" value="1"/>
</dbReference>
<dbReference type="Gene3D" id="3.40.50.300">
    <property type="entry name" value="P-loop containing nucleotide triphosphate hydrolases"/>
    <property type="match status" value="1"/>
</dbReference>
<dbReference type="InterPro" id="IPR027417">
    <property type="entry name" value="P-loop_NTPase"/>
</dbReference>
<dbReference type="InterPro" id="IPR005225">
    <property type="entry name" value="Small_GTP-bd"/>
</dbReference>
<dbReference type="InterPro" id="IPR024156">
    <property type="entry name" value="Small_GTPase_ARF"/>
</dbReference>
<dbReference type="InterPro" id="IPR006689">
    <property type="entry name" value="Small_GTPase_ARF/SAR"/>
</dbReference>
<dbReference type="NCBIfam" id="TIGR00231">
    <property type="entry name" value="small_GTP"/>
    <property type="match status" value="1"/>
</dbReference>
<dbReference type="PANTHER" id="PTHR11711">
    <property type="entry name" value="ADP RIBOSYLATION FACTOR-RELATED"/>
    <property type="match status" value="1"/>
</dbReference>
<dbReference type="Pfam" id="PF00025">
    <property type="entry name" value="Arf"/>
    <property type="match status" value="1"/>
</dbReference>
<dbReference type="PRINTS" id="PR00328">
    <property type="entry name" value="SAR1GTPBP"/>
</dbReference>
<dbReference type="SMART" id="SM00177">
    <property type="entry name" value="ARF"/>
    <property type="match status" value="1"/>
</dbReference>
<dbReference type="SMART" id="SM00175">
    <property type="entry name" value="RAB"/>
    <property type="match status" value="1"/>
</dbReference>
<dbReference type="SMART" id="SM00178">
    <property type="entry name" value="SAR"/>
    <property type="match status" value="1"/>
</dbReference>
<dbReference type="SUPFAM" id="SSF52540">
    <property type="entry name" value="P-loop containing nucleoside triphosphate hydrolases"/>
    <property type="match status" value="1"/>
</dbReference>
<dbReference type="PROSITE" id="PS51417">
    <property type="entry name" value="ARF"/>
    <property type="match status" value="1"/>
</dbReference>